<organism>
    <name type="scientific">Thermomicrobium roseum (strain ATCC 27502 / DSM 5159 / P-2)</name>
    <dbReference type="NCBI Taxonomy" id="309801"/>
    <lineage>
        <taxon>Bacteria</taxon>
        <taxon>Pseudomonadati</taxon>
        <taxon>Thermomicrobiota</taxon>
        <taxon>Thermomicrobia</taxon>
        <taxon>Thermomicrobiales</taxon>
        <taxon>Thermomicrobiaceae</taxon>
        <taxon>Thermomicrobium</taxon>
    </lineage>
</organism>
<keyword id="KW-0004">4Fe-4S</keyword>
<keyword id="KW-1003">Cell membrane</keyword>
<keyword id="KW-0408">Iron</keyword>
<keyword id="KW-0411">Iron-sulfur</keyword>
<keyword id="KW-0472">Membrane</keyword>
<keyword id="KW-0479">Metal-binding</keyword>
<keyword id="KW-0520">NAD</keyword>
<keyword id="KW-0874">Quinone</keyword>
<keyword id="KW-1185">Reference proteome</keyword>
<keyword id="KW-1278">Translocase</keyword>
<keyword id="KW-0813">Transport</keyword>
<keyword id="KW-0830">Ubiquinone</keyword>
<dbReference type="EC" id="7.1.1.-" evidence="1"/>
<dbReference type="EMBL" id="CP001275">
    <property type="protein sequence ID" value="ACM05156.1"/>
    <property type="molecule type" value="Genomic_DNA"/>
</dbReference>
<dbReference type="RefSeq" id="WP_015922723.1">
    <property type="nucleotide sequence ID" value="NC_011959.1"/>
</dbReference>
<dbReference type="SMR" id="B9L170"/>
<dbReference type="STRING" id="309801.trd_1781"/>
<dbReference type="KEGG" id="tro:trd_1781"/>
<dbReference type="eggNOG" id="COG0377">
    <property type="taxonomic scope" value="Bacteria"/>
</dbReference>
<dbReference type="HOGENOM" id="CLU_055737_7_3_0"/>
<dbReference type="OrthoDB" id="9786737at2"/>
<dbReference type="Proteomes" id="UP000000447">
    <property type="component" value="Chromosome"/>
</dbReference>
<dbReference type="GO" id="GO:0005886">
    <property type="term" value="C:plasma membrane"/>
    <property type="evidence" value="ECO:0007669"/>
    <property type="project" value="UniProtKB-SubCell"/>
</dbReference>
<dbReference type="GO" id="GO:0045271">
    <property type="term" value="C:respiratory chain complex I"/>
    <property type="evidence" value="ECO:0007669"/>
    <property type="project" value="TreeGrafter"/>
</dbReference>
<dbReference type="GO" id="GO:0051539">
    <property type="term" value="F:4 iron, 4 sulfur cluster binding"/>
    <property type="evidence" value="ECO:0007669"/>
    <property type="project" value="UniProtKB-KW"/>
</dbReference>
<dbReference type="GO" id="GO:0005506">
    <property type="term" value="F:iron ion binding"/>
    <property type="evidence" value="ECO:0007669"/>
    <property type="project" value="UniProtKB-UniRule"/>
</dbReference>
<dbReference type="GO" id="GO:0008137">
    <property type="term" value="F:NADH dehydrogenase (ubiquinone) activity"/>
    <property type="evidence" value="ECO:0007669"/>
    <property type="project" value="InterPro"/>
</dbReference>
<dbReference type="GO" id="GO:0050136">
    <property type="term" value="F:NADH:ubiquinone reductase (non-electrogenic) activity"/>
    <property type="evidence" value="ECO:0007669"/>
    <property type="project" value="UniProtKB-UniRule"/>
</dbReference>
<dbReference type="GO" id="GO:0048038">
    <property type="term" value="F:quinone binding"/>
    <property type="evidence" value="ECO:0007669"/>
    <property type="project" value="UniProtKB-KW"/>
</dbReference>
<dbReference type="GO" id="GO:0009060">
    <property type="term" value="P:aerobic respiration"/>
    <property type="evidence" value="ECO:0007669"/>
    <property type="project" value="TreeGrafter"/>
</dbReference>
<dbReference type="GO" id="GO:0015990">
    <property type="term" value="P:electron transport coupled proton transport"/>
    <property type="evidence" value="ECO:0007669"/>
    <property type="project" value="TreeGrafter"/>
</dbReference>
<dbReference type="FunFam" id="3.40.50.12280:FF:000002">
    <property type="entry name" value="NADH-quinone oxidoreductase subunit B"/>
    <property type="match status" value="1"/>
</dbReference>
<dbReference type="Gene3D" id="3.40.50.12280">
    <property type="match status" value="1"/>
</dbReference>
<dbReference type="HAMAP" id="MF_01356">
    <property type="entry name" value="NDH1_NuoB"/>
    <property type="match status" value="1"/>
</dbReference>
<dbReference type="InterPro" id="IPR006137">
    <property type="entry name" value="NADH_UbQ_OxRdtase-like_20kDa"/>
</dbReference>
<dbReference type="InterPro" id="IPR006138">
    <property type="entry name" value="NADH_UQ_OxRdtase_20Kd_su"/>
</dbReference>
<dbReference type="NCBIfam" id="TIGR01957">
    <property type="entry name" value="nuoB_fam"/>
    <property type="match status" value="1"/>
</dbReference>
<dbReference type="NCBIfam" id="NF005012">
    <property type="entry name" value="PRK06411.1"/>
    <property type="match status" value="1"/>
</dbReference>
<dbReference type="PANTHER" id="PTHR11995">
    <property type="entry name" value="NADH DEHYDROGENASE"/>
    <property type="match status" value="1"/>
</dbReference>
<dbReference type="PANTHER" id="PTHR11995:SF14">
    <property type="entry name" value="NADH DEHYDROGENASE [UBIQUINONE] IRON-SULFUR PROTEIN 7, MITOCHONDRIAL"/>
    <property type="match status" value="1"/>
</dbReference>
<dbReference type="Pfam" id="PF01058">
    <property type="entry name" value="Oxidored_q6"/>
    <property type="match status" value="1"/>
</dbReference>
<dbReference type="SUPFAM" id="SSF56770">
    <property type="entry name" value="HydA/Nqo6-like"/>
    <property type="match status" value="1"/>
</dbReference>
<protein>
    <recommendedName>
        <fullName evidence="1">NADH-quinone oxidoreductase subunit B</fullName>
        <ecNumber evidence="1">7.1.1.-</ecNumber>
    </recommendedName>
    <alternativeName>
        <fullName evidence="1">NADH dehydrogenase I subunit B</fullName>
    </alternativeName>
    <alternativeName>
        <fullName evidence="1">NDH-1 subunit B</fullName>
    </alternativeName>
</protein>
<comment type="function">
    <text evidence="1">NDH-1 shuttles electrons from NADH, via FMN and iron-sulfur (Fe-S) centers, to quinones in the respiratory chain. The immediate electron acceptor for the enzyme in this species is believed to be ubiquinone. Couples the redox reaction to proton translocation (for every two electrons transferred, four hydrogen ions are translocated across the cytoplasmic membrane), and thus conserves the redox energy in a proton gradient.</text>
</comment>
<comment type="catalytic activity">
    <reaction evidence="1">
        <text>a quinone + NADH + 5 H(+)(in) = a quinol + NAD(+) + 4 H(+)(out)</text>
        <dbReference type="Rhea" id="RHEA:57888"/>
        <dbReference type="ChEBI" id="CHEBI:15378"/>
        <dbReference type="ChEBI" id="CHEBI:24646"/>
        <dbReference type="ChEBI" id="CHEBI:57540"/>
        <dbReference type="ChEBI" id="CHEBI:57945"/>
        <dbReference type="ChEBI" id="CHEBI:132124"/>
    </reaction>
</comment>
<comment type="cofactor">
    <cofactor evidence="1">
        <name>[4Fe-4S] cluster</name>
        <dbReference type="ChEBI" id="CHEBI:49883"/>
    </cofactor>
    <text evidence="1">Binds 1 [4Fe-4S] cluster.</text>
</comment>
<comment type="subunit">
    <text evidence="1">NDH-1 is composed of 14 different subunits. Subunits NuoB, C, D, E, F, and G constitute the peripheral sector of the complex.</text>
</comment>
<comment type="subcellular location">
    <subcellularLocation>
        <location evidence="1">Cell membrane</location>
        <topology evidence="1">Peripheral membrane protein</topology>
        <orientation evidence="1">Cytoplasmic side</orientation>
    </subcellularLocation>
</comment>
<comment type="similarity">
    <text evidence="1">Belongs to the complex I 20 kDa subunit family.</text>
</comment>
<name>NUOB_THERP</name>
<sequence>MGMSAAQSHPNIITTTADWLFSWARRSSLWWLQFGLACCAIEMISSAMPRFDLAERFGMLYRASPRQADLMIVAGTVTKKMAPVVRQLYDQMADPKWVISMGSCANVGGPFDTYAVVQGVDQVIPVDIYVPGCPPVPEALYYGVLELQNRIIRYERLKERYGPEAAEAYREEERQAARSALGPRS</sequence>
<gene>
    <name evidence="1" type="primary">nuoB</name>
    <name type="ordered locus">trd_1781</name>
</gene>
<accession>B9L170</accession>
<evidence type="ECO:0000255" key="1">
    <source>
        <dbReference type="HAMAP-Rule" id="MF_01356"/>
    </source>
</evidence>
<evidence type="ECO:0000256" key="2">
    <source>
        <dbReference type="SAM" id="MobiDB-lite"/>
    </source>
</evidence>
<feature type="chain" id="PRO_0000376397" description="NADH-quinone oxidoreductase subunit B">
    <location>
        <begin position="1"/>
        <end position="185"/>
    </location>
</feature>
<feature type="region of interest" description="Disordered" evidence="2">
    <location>
        <begin position="165"/>
        <end position="185"/>
    </location>
</feature>
<feature type="compositionally biased region" description="Basic and acidic residues" evidence="2">
    <location>
        <begin position="165"/>
        <end position="176"/>
    </location>
</feature>
<feature type="binding site" evidence="1">
    <location>
        <position position="38"/>
    </location>
    <ligand>
        <name>[4Fe-4S] cluster</name>
        <dbReference type="ChEBI" id="CHEBI:49883"/>
    </ligand>
</feature>
<feature type="binding site" evidence="1">
    <location>
        <position position="39"/>
    </location>
    <ligand>
        <name>[4Fe-4S] cluster</name>
        <dbReference type="ChEBI" id="CHEBI:49883"/>
    </ligand>
</feature>
<feature type="binding site" evidence="1">
    <location>
        <position position="104"/>
    </location>
    <ligand>
        <name>[4Fe-4S] cluster</name>
        <dbReference type="ChEBI" id="CHEBI:49883"/>
    </ligand>
</feature>
<feature type="binding site" evidence="1">
    <location>
        <position position="133"/>
    </location>
    <ligand>
        <name>[4Fe-4S] cluster</name>
        <dbReference type="ChEBI" id="CHEBI:49883"/>
    </ligand>
</feature>
<proteinExistence type="inferred from homology"/>
<reference key="1">
    <citation type="journal article" date="2009" name="PLoS ONE">
        <title>Complete genome sequence of the aerobic CO-oxidizing thermophile Thermomicrobium roseum.</title>
        <authorList>
            <person name="Wu D."/>
            <person name="Raymond J."/>
            <person name="Wu M."/>
            <person name="Chatterji S."/>
            <person name="Ren Q."/>
            <person name="Graham J.E."/>
            <person name="Bryant D.A."/>
            <person name="Robb F."/>
            <person name="Colman A."/>
            <person name="Tallon L.J."/>
            <person name="Badger J.H."/>
            <person name="Madupu R."/>
            <person name="Ward N.L."/>
            <person name="Eisen J.A."/>
        </authorList>
    </citation>
    <scope>NUCLEOTIDE SEQUENCE [LARGE SCALE GENOMIC DNA]</scope>
    <source>
        <strain>ATCC 27502 / DSM 5159 / P-2</strain>
    </source>
</reference>